<name>Y2127_STRCO</name>
<comment type="function">
    <text evidence="3">May be involved in glucose transport or metabolism.</text>
</comment>
<comment type="subunit">
    <text evidence="3">It may form a heterotetramer of two glucokinase subunits (glk) with two ORF2 proteins.</text>
</comment>
<comment type="induction">
    <text evidence="2">Transcribed at low levels from its own promoter. Transcript includes downstream gene glk. Expressed when grown on glucose or galactose, levels decrease as cells enter stationary phase.</text>
</comment>
<gene>
    <name type="ordered locus">SCO2127</name>
    <name type="ORF">SC6E10.21c</name>
</gene>
<dbReference type="EMBL" id="X65932">
    <property type="protein sequence ID" value="CAA46726.1"/>
    <property type="molecule type" value="Genomic_DNA"/>
</dbReference>
<dbReference type="EMBL" id="AL939111">
    <property type="protein sequence ID" value="CAB51975.1"/>
    <property type="molecule type" value="Genomic_DNA"/>
</dbReference>
<dbReference type="PIR" id="T35508">
    <property type="entry name" value="T35508"/>
</dbReference>
<dbReference type="RefSeq" id="NP_626384.1">
    <property type="nucleotide sequence ID" value="NC_003888.3"/>
</dbReference>
<dbReference type="RefSeq" id="WP_011028152.1">
    <property type="nucleotide sequence ID" value="NZ_VNID01000001.1"/>
</dbReference>
<dbReference type="SMR" id="P40182"/>
<dbReference type="STRING" id="100226.gene:17759725"/>
<dbReference type="PaxDb" id="100226-SCO2127"/>
<dbReference type="KEGG" id="sco:SCO2127"/>
<dbReference type="PATRIC" id="fig|100226.15.peg.2162"/>
<dbReference type="eggNOG" id="ENOG50340VK">
    <property type="taxonomic scope" value="Bacteria"/>
</dbReference>
<dbReference type="HOGENOM" id="CLU_120031_0_0_11"/>
<dbReference type="InParanoid" id="P40182"/>
<dbReference type="OrthoDB" id="3853386at2"/>
<dbReference type="Proteomes" id="UP000001973">
    <property type="component" value="Chromosome"/>
</dbReference>
<dbReference type="GO" id="GO:0006006">
    <property type="term" value="P:glucose metabolic process"/>
    <property type="evidence" value="ECO:0007669"/>
    <property type="project" value="UniProtKB-KW"/>
</dbReference>
<dbReference type="InterPro" id="IPR035183">
    <property type="entry name" value="DUF5304"/>
</dbReference>
<dbReference type="Pfam" id="PF17230">
    <property type="entry name" value="DUF5304"/>
    <property type="match status" value="1"/>
</dbReference>
<feature type="chain" id="PRO_0000205345" description="Uncharacterized protein SCO2127">
    <location>
        <begin position="1"/>
        <end position="191"/>
    </location>
</feature>
<feature type="region of interest" description="Disordered" evidence="1">
    <location>
        <begin position="1"/>
        <end position="42"/>
    </location>
</feature>
<feature type="region of interest" description="Disordered" evidence="1">
    <location>
        <begin position="145"/>
        <end position="191"/>
    </location>
</feature>
<feature type="compositionally biased region" description="Basic and acidic residues" evidence="1">
    <location>
        <begin position="11"/>
        <end position="26"/>
    </location>
</feature>
<feature type="compositionally biased region" description="Basic and acidic residues" evidence="1">
    <location>
        <begin position="147"/>
        <end position="178"/>
    </location>
</feature>
<reference key="1">
    <citation type="journal article" date="1992" name="Mol. Microbiol.">
        <title>The glucose kinase gene of Streptomyces coelicolor A3(2): its nucleotide sequence, transcriptional analysis and role in glucose repression.</title>
        <authorList>
            <person name="Angell S."/>
            <person name="Schwarz E."/>
            <person name="Bibb M.J."/>
        </authorList>
    </citation>
    <scope>NUCLEOTIDE SEQUENCE [GENOMIC DNA]</scope>
    <scope>POSSIBLE FUNCTION</scope>
    <scope>POSSIBLE SUBUNIT</scope>
    <scope>INDUCTION</scope>
    <source>
        <strain>A3(2) / NRRL B-16638</strain>
    </source>
</reference>
<reference key="2">
    <citation type="journal article" date="2002" name="Nature">
        <title>Complete genome sequence of the model actinomycete Streptomyces coelicolor A3(2).</title>
        <authorList>
            <person name="Bentley S.D."/>
            <person name="Chater K.F."/>
            <person name="Cerdeno-Tarraga A.-M."/>
            <person name="Challis G.L."/>
            <person name="Thomson N.R."/>
            <person name="James K.D."/>
            <person name="Harris D.E."/>
            <person name="Quail M.A."/>
            <person name="Kieser H."/>
            <person name="Harper D."/>
            <person name="Bateman A."/>
            <person name="Brown S."/>
            <person name="Chandra G."/>
            <person name="Chen C.W."/>
            <person name="Collins M."/>
            <person name="Cronin A."/>
            <person name="Fraser A."/>
            <person name="Goble A."/>
            <person name="Hidalgo J."/>
            <person name="Hornsby T."/>
            <person name="Howarth S."/>
            <person name="Huang C.-H."/>
            <person name="Kieser T."/>
            <person name="Larke L."/>
            <person name="Murphy L.D."/>
            <person name="Oliver K."/>
            <person name="O'Neil S."/>
            <person name="Rabbinowitsch E."/>
            <person name="Rajandream M.A."/>
            <person name="Rutherford K.M."/>
            <person name="Rutter S."/>
            <person name="Seeger K."/>
            <person name="Saunders D."/>
            <person name="Sharp S."/>
            <person name="Squares R."/>
            <person name="Squares S."/>
            <person name="Taylor K."/>
            <person name="Warren T."/>
            <person name="Wietzorrek A."/>
            <person name="Woodward J.R."/>
            <person name="Barrell B.G."/>
            <person name="Parkhill J."/>
            <person name="Hopwood D.A."/>
        </authorList>
    </citation>
    <scope>NUCLEOTIDE SEQUENCE [LARGE SCALE GENOMIC DNA]</scope>
    <source>
        <strain>ATCC BAA-471 / A3(2) / M145</strain>
    </source>
</reference>
<protein>
    <recommendedName>
        <fullName>Uncharacterized protein SCO2127</fullName>
    </recommendedName>
</protein>
<evidence type="ECO:0000256" key="1">
    <source>
        <dbReference type="SAM" id="MobiDB-lite"/>
    </source>
</evidence>
<evidence type="ECO:0000269" key="2">
    <source>
    </source>
</evidence>
<evidence type="ECO:0000305" key="3">
    <source>
    </source>
</evidence>
<organism>
    <name type="scientific">Streptomyces coelicolor (strain ATCC BAA-471 / A3(2) / M145)</name>
    <dbReference type="NCBI Taxonomy" id="100226"/>
    <lineage>
        <taxon>Bacteria</taxon>
        <taxon>Bacillati</taxon>
        <taxon>Actinomycetota</taxon>
        <taxon>Actinomycetes</taxon>
        <taxon>Kitasatosporales</taxon>
        <taxon>Streptomycetaceae</taxon>
        <taxon>Streptomyces</taxon>
        <taxon>Streptomyces albidoflavus group</taxon>
    </lineage>
</organism>
<sequence>MSEELPPSEAPRPDEADAVDETRATGETRGAAQEPGASDADAWATACAEDLEAEKARRRAAYGPPPGSAAEELRRLVDTVADKLSGLQSPLLGQVAGPAAQQVVRQVVQQAKAAVEPVIERNPDLFDHLAAAGGELLAAYRSAVQNQERRWTTGDTAPKDPSDPRDLDERGTDGRDEGDGGTGPGQRIDLD</sequence>
<keyword id="KW-0119">Carbohydrate metabolism</keyword>
<keyword id="KW-0313">Glucose metabolism</keyword>
<keyword id="KW-1185">Reference proteome</keyword>
<keyword id="KW-0762">Sugar transport</keyword>
<keyword id="KW-0813">Transport</keyword>
<accession>P40182</accession>
<proteinExistence type="evidence at protein level"/>